<reference key="1">
    <citation type="journal article" date="2001" name="J. Virol.">
        <title>The vaccinia virus superoxide dismutase-like protein (A45R) is a virion component that is nonessential for virus replication.</title>
        <authorList>
            <person name="Almazan F."/>
            <person name="Tscharke D.C."/>
            <person name="Smith G.L."/>
        </authorList>
    </citation>
    <scope>NUCLEOTIDE SEQUENCE [GENOMIC DNA]</scope>
</reference>
<sequence length="125" mass="13691">MAVCIIDHDNIRGVIYFEPVHGKDKVLGSVIGLKSGTYSLIIHRYGDISRGCDSIGSPEIFIGNIFVNRYGVAYVYLDTDVNISTIIGKALSISKNDQRLACGVIGISYINEKIIHFLTINENGV</sequence>
<protein>
    <recommendedName>
        <fullName>Cu-Zn superoxide dismutase-like protein OPG175</fullName>
    </recommendedName>
</protein>
<proteinExistence type="inferred from homology"/>
<organism>
    <name type="scientific">Vaccinia virus (strain Dairen I)</name>
    <name type="common">VACV</name>
    <dbReference type="NCBI Taxonomy" id="10250"/>
    <lineage>
        <taxon>Viruses</taxon>
        <taxon>Varidnaviria</taxon>
        <taxon>Bamfordvirae</taxon>
        <taxon>Nucleocytoviricota</taxon>
        <taxon>Pokkesviricetes</taxon>
        <taxon>Chitovirales</taxon>
        <taxon>Poxviridae</taxon>
        <taxon>Chordopoxvirinae</taxon>
        <taxon>Orthopoxvirus</taxon>
        <taxon>Vaccinia virus</taxon>
    </lineage>
</organism>
<organismHost>
    <name type="scientific">Homo sapiens</name>
    <name type="common">Human</name>
    <dbReference type="NCBI Taxonomy" id="9606"/>
</organismHost>
<name>SODL_VACCD</name>
<comment type="function">
    <text evidence="2">Superoxide dismutase-like protein with no enzymatic activity.</text>
</comment>
<comment type="subcellular location">
    <subcellularLocation>
        <location evidence="2">Virion</location>
    </subcellularLocation>
    <subcellularLocation>
        <location evidence="2">Host cytoplasm</location>
    </subcellularLocation>
    <text evidence="2">Accumulates predominantly in cytoplasmic viral factories.</text>
</comment>
<comment type="similarity">
    <text evidence="3">Belongs to the Cu-Zn superoxide dismutase family.</text>
</comment>
<dbReference type="EMBL" id="AF349002">
    <property type="protein sequence ID" value="AAK76403.1"/>
    <property type="molecule type" value="Genomic_DNA"/>
</dbReference>
<dbReference type="SMR" id="Q91M96"/>
<dbReference type="GO" id="GO:0030430">
    <property type="term" value="C:host cell cytoplasm"/>
    <property type="evidence" value="ECO:0007669"/>
    <property type="project" value="UniProtKB-SubCell"/>
</dbReference>
<dbReference type="GO" id="GO:0044423">
    <property type="term" value="C:virion component"/>
    <property type="evidence" value="ECO:0007669"/>
    <property type="project" value="UniProtKB-KW"/>
</dbReference>
<dbReference type="GO" id="GO:0046872">
    <property type="term" value="F:metal ion binding"/>
    <property type="evidence" value="ECO:0007669"/>
    <property type="project" value="InterPro"/>
</dbReference>
<dbReference type="GO" id="GO:0006801">
    <property type="term" value="P:superoxide metabolic process"/>
    <property type="evidence" value="ECO:0007669"/>
    <property type="project" value="InterPro"/>
</dbReference>
<dbReference type="Gene3D" id="2.60.40.200">
    <property type="entry name" value="Superoxide dismutase, copper/zinc binding domain"/>
    <property type="match status" value="1"/>
</dbReference>
<dbReference type="InterPro" id="IPR036423">
    <property type="entry name" value="SOD-like_Cu/Zn_dom_sf"/>
</dbReference>
<dbReference type="SUPFAM" id="SSF49329">
    <property type="entry name" value="Cu,Zn superoxide dismutase-like"/>
    <property type="match status" value="1"/>
</dbReference>
<evidence type="ECO:0000250" key="1"/>
<evidence type="ECO:0000250" key="2">
    <source>
        <dbReference type="UniProtKB" id="P26669"/>
    </source>
</evidence>
<evidence type="ECO:0000305" key="3"/>
<keyword id="KW-1015">Disulfide bond</keyword>
<keyword id="KW-1035">Host cytoplasm</keyword>
<keyword id="KW-0946">Virion</keyword>
<gene>
    <name type="primary">OPG175</name>
    <name type="ORF">A45R</name>
</gene>
<feature type="chain" id="PRO_0000164166" description="Cu-Zn superoxide dismutase-like protein OPG175">
    <location>
        <begin position="1"/>
        <end position="125"/>
    </location>
</feature>
<feature type="disulfide bond" evidence="1">
    <location>
        <begin position="52"/>
        <end position="102"/>
    </location>
</feature>
<accession>Q91M96</accession>